<reference key="1">
    <citation type="submission" date="2007-10" db="EMBL/GenBank/DDBJ databases">
        <title>Complete sequence of Shewanella pealeana ATCC 700345.</title>
        <authorList>
            <consortium name="US DOE Joint Genome Institute"/>
            <person name="Copeland A."/>
            <person name="Lucas S."/>
            <person name="Lapidus A."/>
            <person name="Barry K."/>
            <person name="Glavina del Rio T."/>
            <person name="Dalin E."/>
            <person name="Tice H."/>
            <person name="Pitluck S."/>
            <person name="Chertkov O."/>
            <person name="Brettin T."/>
            <person name="Bruce D."/>
            <person name="Detter J.C."/>
            <person name="Han C."/>
            <person name="Schmutz J."/>
            <person name="Larimer F."/>
            <person name="Land M."/>
            <person name="Hauser L."/>
            <person name="Kyrpides N."/>
            <person name="Kim E."/>
            <person name="Zhao J.-S.Z."/>
            <person name="Manno D."/>
            <person name="Hawari J."/>
            <person name="Richardson P."/>
        </authorList>
    </citation>
    <scope>NUCLEOTIDE SEQUENCE [LARGE SCALE GENOMIC DNA]</scope>
    <source>
        <strain>ATCC 700345 / ANG-SQ1</strain>
    </source>
</reference>
<dbReference type="EC" id="6.3.2.1" evidence="1"/>
<dbReference type="EMBL" id="CP000851">
    <property type="protein sequence ID" value="ABV86020.1"/>
    <property type="molecule type" value="Genomic_DNA"/>
</dbReference>
<dbReference type="RefSeq" id="WP_012153956.1">
    <property type="nucleotide sequence ID" value="NC_009901.1"/>
</dbReference>
<dbReference type="SMR" id="A8H0D3"/>
<dbReference type="STRING" id="398579.Spea_0693"/>
<dbReference type="KEGG" id="spl:Spea_0693"/>
<dbReference type="eggNOG" id="COG0414">
    <property type="taxonomic scope" value="Bacteria"/>
</dbReference>
<dbReference type="HOGENOM" id="CLU_047148_0_0_6"/>
<dbReference type="OrthoDB" id="9773087at2"/>
<dbReference type="UniPathway" id="UPA00028">
    <property type="reaction ID" value="UER00005"/>
</dbReference>
<dbReference type="Proteomes" id="UP000002608">
    <property type="component" value="Chromosome"/>
</dbReference>
<dbReference type="GO" id="GO:0005829">
    <property type="term" value="C:cytosol"/>
    <property type="evidence" value="ECO:0007669"/>
    <property type="project" value="TreeGrafter"/>
</dbReference>
<dbReference type="GO" id="GO:0005524">
    <property type="term" value="F:ATP binding"/>
    <property type="evidence" value="ECO:0007669"/>
    <property type="project" value="UniProtKB-KW"/>
</dbReference>
<dbReference type="GO" id="GO:0004592">
    <property type="term" value="F:pantoate-beta-alanine ligase activity"/>
    <property type="evidence" value="ECO:0007669"/>
    <property type="project" value="UniProtKB-UniRule"/>
</dbReference>
<dbReference type="GO" id="GO:0015940">
    <property type="term" value="P:pantothenate biosynthetic process"/>
    <property type="evidence" value="ECO:0007669"/>
    <property type="project" value="UniProtKB-UniRule"/>
</dbReference>
<dbReference type="CDD" id="cd00560">
    <property type="entry name" value="PanC"/>
    <property type="match status" value="1"/>
</dbReference>
<dbReference type="FunFam" id="3.40.50.620:FF:000013">
    <property type="entry name" value="Pantothenate synthetase"/>
    <property type="match status" value="1"/>
</dbReference>
<dbReference type="Gene3D" id="3.40.50.620">
    <property type="entry name" value="HUPs"/>
    <property type="match status" value="1"/>
</dbReference>
<dbReference type="Gene3D" id="3.30.1300.10">
    <property type="entry name" value="Pantoate-beta-alanine ligase, C-terminal domain"/>
    <property type="match status" value="1"/>
</dbReference>
<dbReference type="HAMAP" id="MF_00158">
    <property type="entry name" value="PanC"/>
    <property type="match status" value="1"/>
</dbReference>
<dbReference type="InterPro" id="IPR004821">
    <property type="entry name" value="Cyt_trans-like"/>
</dbReference>
<dbReference type="InterPro" id="IPR003721">
    <property type="entry name" value="Pantoate_ligase"/>
</dbReference>
<dbReference type="InterPro" id="IPR042176">
    <property type="entry name" value="Pantoate_ligase_C"/>
</dbReference>
<dbReference type="InterPro" id="IPR014729">
    <property type="entry name" value="Rossmann-like_a/b/a_fold"/>
</dbReference>
<dbReference type="NCBIfam" id="TIGR00125">
    <property type="entry name" value="cyt_tran_rel"/>
    <property type="match status" value="1"/>
</dbReference>
<dbReference type="NCBIfam" id="TIGR00018">
    <property type="entry name" value="panC"/>
    <property type="match status" value="1"/>
</dbReference>
<dbReference type="PANTHER" id="PTHR21299">
    <property type="entry name" value="CYTIDYLATE KINASE/PANTOATE-BETA-ALANINE LIGASE"/>
    <property type="match status" value="1"/>
</dbReference>
<dbReference type="PANTHER" id="PTHR21299:SF1">
    <property type="entry name" value="PANTOATE--BETA-ALANINE LIGASE"/>
    <property type="match status" value="1"/>
</dbReference>
<dbReference type="Pfam" id="PF02569">
    <property type="entry name" value="Pantoate_ligase"/>
    <property type="match status" value="1"/>
</dbReference>
<dbReference type="SUPFAM" id="SSF52374">
    <property type="entry name" value="Nucleotidylyl transferase"/>
    <property type="match status" value="1"/>
</dbReference>
<name>PANC_SHEPA</name>
<proteinExistence type="inferred from homology"/>
<evidence type="ECO:0000255" key="1">
    <source>
        <dbReference type="HAMAP-Rule" id="MF_00158"/>
    </source>
</evidence>
<keyword id="KW-0067">ATP-binding</keyword>
<keyword id="KW-0963">Cytoplasm</keyword>
<keyword id="KW-0436">Ligase</keyword>
<keyword id="KW-0547">Nucleotide-binding</keyword>
<keyword id="KW-0566">Pantothenate biosynthesis</keyword>
<keyword id="KW-1185">Reference proteome</keyword>
<comment type="function">
    <text evidence="1">Catalyzes the condensation of pantoate with beta-alanine in an ATP-dependent reaction via a pantoyl-adenylate intermediate.</text>
</comment>
<comment type="catalytic activity">
    <reaction evidence="1">
        <text>(R)-pantoate + beta-alanine + ATP = (R)-pantothenate + AMP + diphosphate + H(+)</text>
        <dbReference type="Rhea" id="RHEA:10912"/>
        <dbReference type="ChEBI" id="CHEBI:15378"/>
        <dbReference type="ChEBI" id="CHEBI:15980"/>
        <dbReference type="ChEBI" id="CHEBI:29032"/>
        <dbReference type="ChEBI" id="CHEBI:30616"/>
        <dbReference type="ChEBI" id="CHEBI:33019"/>
        <dbReference type="ChEBI" id="CHEBI:57966"/>
        <dbReference type="ChEBI" id="CHEBI:456215"/>
        <dbReference type="EC" id="6.3.2.1"/>
    </reaction>
</comment>
<comment type="pathway">
    <text evidence="1">Cofactor biosynthesis; (R)-pantothenate biosynthesis; (R)-pantothenate from (R)-pantoate and beta-alanine: step 1/1.</text>
</comment>
<comment type="subunit">
    <text evidence="1">Homodimer.</text>
</comment>
<comment type="subcellular location">
    <subcellularLocation>
        <location evidence="1">Cytoplasm</location>
    </subcellularLocation>
</comment>
<comment type="miscellaneous">
    <text evidence="1">The reaction proceeds by a bi uni uni bi ping pong mechanism.</text>
</comment>
<comment type="similarity">
    <text evidence="1">Belongs to the pantothenate synthetase family.</text>
</comment>
<accession>A8H0D3</accession>
<protein>
    <recommendedName>
        <fullName evidence="1">Pantothenate synthetase</fullName>
        <shortName evidence="1">PS</shortName>
        <ecNumber evidence="1">6.3.2.1</ecNumber>
    </recommendedName>
    <alternativeName>
        <fullName evidence="1">Pantoate--beta-alanine ligase</fullName>
    </alternativeName>
    <alternativeName>
        <fullName evidence="1">Pantoate-activating enzyme</fullName>
    </alternativeName>
</protein>
<organism>
    <name type="scientific">Shewanella pealeana (strain ATCC 700345 / ANG-SQ1)</name>
    <dbReference type="NCBI Taxonomy" id="398579"/>
    <lineage>
        <taxon>Bacteria</taxon>
        <taxon>Pseudomonadati</taxon>
        <taxon>Pseudomonadota</taxon>
        <taxon>Gammaproteobacteria</taxon>
        <taxon>Alteromonadales</taxon>
        <taxon>Shewanellaceae</taxon>
        <taxon>Shewanella</taxon>
    </lineage>
</organism>
<gene>
    <name evidence="1" type="primary">panC</name>
    <name type="ordered locus">Spea_0693</name>
</gene>
<feature type="chain" id="PRO_1000097112" description="Pantothenate synthetase">
    <location>
        <begin position="1"/>
        <end position="283"/>
    </location>
</feature>
<feature type="active site" description="Proton donor" evidence="1">
    <location>
        <position position="37"/>
    </location>
</feature>
<feature type="binding site" evidence="1">
    <location>
        <begin position="30"/>
        <end position="37"/>
    </location>
    <ligand>
        <name>ATP</name>
        <dbReference type="ChEBI" id="CHEBI:30616"/>
    </ligand>
</feature>
<feature type="binding site" evidence="1">
    <location>
        <position position="61"/>
    </location>
    <ligand>
        <name>(R)-pantoate</name>
        <dbReference type="ChEBI" id="CHEBI:15980"/>
    </ligand>
</feature>
<feature type="binding site" evidence="1">
    <location>
        <position position="61"/>
    </location>
    <ligand>
        <name>beta-alanine</name>
        <dbReference type="ChEBI" id="CHEBI:57966"/>
    </ligand>
</feature>
<feature type="binding site" evidence="1">
    <location>
        <begin position="149"/>
        <end position="152"/>
    </location>
    <ligand>
        <name>ATP</name>
        <dbReference type="ChEBI" id="CHEBI:30616"/>
    </ligand>
</feature>
<feature type="binding site" evidence="1">
    <location>
        <position position="155"/>
    </location>
    <ligand>
        <name>(R)-pantoate</name>
        <dbReference type="ChEBI" id="CHEBI:15980"/>
    </ligand>
</feature>
<feature type="binding site" evidence="1">
    <location>
        <position position="178"/>
    </location>
    <ligand>
        <name>ATP</name>
        <dbReference type="ChEBI" id="CHEBI:30616"/>
    </ligand>
</feature>
<feature type="binding site" evidence="1">
    <location>
        <begin position="186"/>
        <end position="189"/>
    </location>
    <ligand>
        <name>ATP</name>
        <dbReference type="ChEBI" id="CHEBI:30616"/>
    </ligand>
</feature>
<sequence>MITTQSISDIRKQVTAWRLKGETVAFVPTMGNLHLGHITLVKEAKTRADHVVASIFVNPMQFGQNEDLDAYPRTLADDQAALIEAGAELLFTPTPDIIYPKGMDAQTFVEVPSISDELCGASRPGHFRGVATIVCKLFNIVQPDIAVFGQKDFQQLLVIRTMVEDLSMPIEIVGIETIRETSGLAMSSRNGYLTTEQKDQASQIKRTLNNMALSLKAGLLIKDVVAKAQAELVHVGFRNDYLDVRNANTFAIATAADKDLVILVAAYMGSTRLIDNLVVKLAY</sequence>